<keyword id="KW-1185">Reference proteome</keyword>
<keyword id="KW-0687">Ribonucleoprotein</keyword>
<keyword id="KW-0689">Ribosomal protein</keyword>
<keyword id="KW-0694">RNA-binding</keyword>
<keyword id="KW-0699">rRNA-binding</keyword>
<name>RL21_AFIC5</name>
<gene>
    <name evidence="1" type="primary">rplU</name>
    <name type="ordered locus">OCAR_4610</name>
    <name type="ordered locus">OCA5_c33340</name>
</gene>
<feature type="chain" id="PRO_1000143828" description="Large ribosomal subunit protein bL21">
    <location>
        <begin position="1"/>
        <end position="164"/>
    </location>
</feature>
<feature type="region of interest" description="Disordered" evidence="2">
    <location>
        <begin position="105"/>
        <end position="164"/>
    </location>
</feature>
<feature type="compositionally biased region" description="Basic residues" evidence="2">
    <location>
        <begin position="133"/>
        <end position="164"/>
    </location>
</feature>
<evidence type="ECO:0000255" key="1">
    <source>
        <dbReference type="HAMAP-Rule" id="MF_01363"/>
    </source>
</evidence>
<evidence type="ECO:0000256" key="2">
    <source>
        <dbReference type="SAM" id="MobiDB-lite"/>
    </source>
</evidence>
<evidence type="ECO:0000305" key="3"/>
<accession>B6JD24</accession>
<accession>F8BTB6</accession>
<protein>
    <recommendedName>
        <fullName evidence="1">Large ribosomal subunit protein bL21</fullName>
    </recommendedName>
    <alternativeName>
        <fullName evidence="3">50S ribosomal protein L21</fullName>
    </alternativeName>
</protein>
<comment type="function">
    <text evidence="1">This protein binds to 23S rRNA in the presence of protein L20.</text>
</comment>
<comment type="subunit">
    <text evidence="1">Part of the 50S ribosomal subunit. Contacts protein L20.</text>
</comment>
<comment type="similarity">
    <text evidence="1">Belongs to the bacterial ribosomal protein bL21 family.</text>
</comment>
<reference key="1">
    <citation type="journal article" date="2008" name="J. Bacteriol.">
        <title>Genome sequence of the chemolithoautotrophic bacterium Oligotropha carboxidovorans OM5T.</title>
        <authorList>
            <person name="Paul D."/>
            <person name="Bridges S."/>
            <person name="Burgess S.C."/>
            <person name="Dandass Y."/>
            <person name="Lawrence M.L."/>
        </authorList>
    </citation>
    <scope>NUCLEOTIDE SEQUENCE [LARGE SCALE GENOMIC DNA]</scope>
    <source>
        <strain>ATCC 49405 / DSM 1227 / KCTC 32145 / OM5</strain>
    </source>
</reference>
<reference key="2">
    <citation type="journal article" date="2011" name="J. Bacteriol.">
        <title>Complete genome sequences of the chemolithoautotrophic Oligotropha carboxidovorans strains OM4 and OM5.</title>
        <authorList>
            <person name="Volland S."/>
            <person name="Rachinger M."/>
            <person name="Strittmatter A."/>
            <person name="Daniel R."/>
            <person name="Gottschalk G."/>
            <person name="Meyer O."/>
        </authorList>
    </citation>
    <scope>NUCLEOTIDE SEQUENCE [LARGE SCALE GENOMIC DNA]</scope>
    <source>
        <strain>ATCC 49405 / DSM 1227 / KCTC 32145 / OM5</strain>
    </source>
</reference>
<proteinExistence type="inferred from homology"/>
<organism>
    <name type="scientific">Afipia carboxidovorans (strain ATCC 49405 / DSM 1227 / KCTC 32145 / OM5)</name>
    <name type="common">Oligotropha carboxidovorans</name>
    <dbReference type="NCBI Taxonomy" id="504832"/>
    <lineage>
        <taxon>Bacteria</taxon>
        <taxon>Pseudomonadati</taxon>
        <taxon>Pseudomonadota</taxon>
        <taxon>Alphaproteobacteria</taxon>
        <taxon>Hyphomicrobiales</taxon>
        <taxon>Nitrobacteraceae</taxon>
        <taxon>Afipia</taxon>
    </lineage>
</organism>
<dbReference type="EMBL" id="CP001196">
    <property type="protein sequence ID" value="ACI91754.1"/>
    <property type="molecule type" value="Genomic_DNA"/>
</dbReference>
<dbReference type="EMBL" id="CP002826">
    <property type="protein sequence ID" value="AEI08008.1"/>
    <property type="molecule type" value="Genomic_DNA"/>
</dbReference>
<dbReference type="RefSeq" id="WP_012561785.1">
    <property type="nucleotide sequence ID" value="NC_015684.1"/>
</dbReference>
<dbReference type="SMR" id="B6JD24"/>
<dbReference type="STRING" id="504832.OCA5_c33340"/>
<dbReference type="KEGG" id="oca:OCAR_4610"/>
<dbReference type="KEGG" id="ocg:OCA5_c33340"/>
<dbReference type="PATRIC" id="fig|504832.7.peg.3504"/>
<dbReference type="eggNOG" id="COG0261">
    <property type="taxonomic scope" value="Bacteria"/>
</dbReference>
<dbReference type="HOGENOM" id="CLU_061463_1_2_5"/>
<dbReference type="OrthoDB" id="9813334at2"/>
<dbReference type="Proteomes" id="UP000007730">
    <property type="component" value="Chromosome"/>
</dbReference>
<dbReference type="GO" id="GO:0005737">
    <property type="term" value="C:cytoplasm"/>
    <property type="evidence" value="ECO:0007669"/>
    <property type="project" value="UniProtKB-ARBA"/>
</dbReference>
<dbReference type="GO" id="GO:1990904">
    <property type="term" value="C:ribonucleoprotein complex"/>
    <property type="evidence" value="ECO:0007669"/>
    <property type="project" value="UniProtKB-KW"/>
</dbReference>
<dbReference type="GO" id="GO:0005840">
    <property type="term" value="C:ribosome"/>
    <property type="evidence" value="ECO:0007669"/>
    <property type="project" value="UniProtKB-KW"/>
</dbReference>
<dbReference type="GO" id="GO:0019843">
    <property type="term" value="F:rRNA binding"/>
    <property type="evidence" value="ECO:0007669"/>
    <property type="project" value="UniProtKB-UniRule"/>
</dbReference>
<dbReference type="GO" id="GO:0003735">
    <property type="term" value="F:structural constituent of ribosome"/>
    <property type="evidence" value="ECO:0007669"/>
    <property type="project" value="InterPro"/>
</dbReference>
<dbReference type="GO" id="GO:0006412">
    <property type="term" value="P:translation"/>
    <property type="evidence" value="ECO:0007669"/>
    <property type="project" value="UniProtKB-UniRule"/>
</dbReference>
<dbReference type="HAMAP" id="MF_01363">
    <property type="entry name" value="Ribosomal_bL21"/>
    <property type="match status" value="1"/>
</dbReference>
<dbReference type="InterPro" id="IPR028909">
    <property type="entry name" value="bL21-like"/>
</dbReference>
<dbReference type="InterPro" id="IPR036164">
    <property type="entry name" value="bL21-like_sf"/>
</dbReference>
<dbReference type="InterPro" id="IPR001787">
    <property type="entry name" value="Ribosomal_bL21"/>
</dbReference>
<dbReference type="NCBIfam" id="TIGR00061">
    <property type="entry name" value="L21"/>
    <property type="match status" value="1"/>
</dbReference>
<dbReference type="PANTHER" id="PTHR21349">
    <property type="entry name" value="50S RIBOSOMAL PROTEIN L21"/>
    <property type="match status" value="1"/>
</dbReference>
<dbReference type="PANTHER" id="PTHR21349:SF0">
    <property type="entry name" value="LARGE RIBOSOMAL SUBUNIT PROTEIN BL21M"/>
    <property type="match status" value="1"/>
</dbReference>
<dbReference type="Pfam" id="PF00829">
    <property type="entry name" value="Ribosomal_L21p"/>
    <property type="match status" value="1"/>
</dbReference>
<dbReference type="SUPFAM" id="SSF141091">
    <property type="entry name" value="L21p-like"/>
    <property type="match status" value="1"/>
</dbReference>
<sequence>MFAVIKTGGRQFRVVPNDVLEIGKITGDVGTIVQLGEVMAVGGDTPVLGFPFIEGASVAAEILDHKRGPKVIAFKKRRRKNSKRKRGYRDEITVIRVTEILTDDKAPTIGPRAKKEKKVEAAPADGEAPAKKAPAKKAAAKKAAPKAAAKKAPAKKAAPKAKSE</sequence>